<organism>
    <name type="scientific">Shigella dysenteriae serotype 1 (strain Sd197)</name>
    <dbReference type="NCBI Taxonomy" id="300267"/>
    <lineage>
        <taxon>Bacteria</taxon>
        <taxon>Pseudomonadati</taxon>
        <taxon>Pseudomonadota</taxon>
        <taxon>Gammaproteobacteria</taxon>
        <taxon>Enterobacterales</taxon>
        <taxon>Enterobacteriaceae</taxon>
        <taxon>Shigella</taxon>
    </lineage>
</organism>
<sequence length="553" mass="59036">MSDIALTVSILALVAVVGLFIGNVKFRGIGLGIGGVLFGGIIVGHFVSQAGMTLSSDMLHVIQEFGLILFVYTIGIQVGPGFFASLRVSGLRLNLFAVLIVIIGGLVTAILHKLFDIPLPVVLGIFSGAVTNTPALGAGQQILRDLGTPMEMVDQMGMSYAMAYPFGICGILFTMWMLRVIFRVNVETEAQQHESSRTNGGALIKTINIRVENLNLHDLAIKDVPILNGDKIICSRLKREETLKVPSPDTIIQLGDLLHLVGQPADLHNAQLVIGQEVDTSLSTKGTDLRVERVVVTNENVLGKRIRDLHFKERYDVVISRLNRAGVELVASGDISLQFGDILNLVGRPSAIDAVANVLGNAQQKLQQVQMLPVFIGIGLGVLLGSIPVFVPRFPAALKLGLAGGPLIMALILGRIGSIGKLYWFMPPSANLALRELGIVLFLSVVGLKSGGDFVNTLVNGEGLSWIGYGALITAVPLITVGILARILAKMNYLTMCGMLAGSMTDPPALAFANNLHPTSGAAALSYATVYPLVMFLRIITPQLLAVLFWSIG</sequence>
<reference key="1">
    <citation type="journal article" date="2005" name="Nucleic Acids Res.">
        <title>Genome dynamics and diversity of Shigella species, the etiologic agents of bacillary dysentery.</title>
        <authorList>
            <person name="Yang F."/>
            <person name="Yang J."/>
            <person name="Zhang X."/>
            <person name="Chen L."/>
            <person name="Jiang Y."/>
            <person name="Yan Y."/>
            <person name="Tang X."/>
            <person name="Wang J."/>
            <person name="Xiong Z."/>
            <person name="Dong J."/>
            <person name="Xue Y."/>
            <person name="Zhu Y."/>
            <person name="Xu X."/>
            <person name="Sun L."/>
            <person name="Chen S."/>
            <person name="Nie H."/>
            <person name="Peng J."/>
            <person name="Xu J."/>
            <person name="Wang Y."/>
            <person name="Yuan Z."/>
            <person name="Wen Y."/>
            <person name="Yao Z."/>
            <person name="Shen Y."/>
            <person name="Qiang B."/>
            <person name="Hou Y."/>
            <person name="Yu J."/>
            <person name="Jin Q."/>
        </authorList>
    </citation>
    <scope>NUCLEOTIDE SEQUENCE [LARGE SCALE GENOMIC DNA]</scope>
    <source>
        <strain>Sd197</strain>
    </source>
</reference>
<gene>
    <name evidence="1" type="primary">yidE</name>
    <name type="ordered locus">SDY_4171</name>
</gene>
<feature type="chain" id="PRO_0000226894" description="Putative transport protein YidE">
    <location>
        <begin position="1"/>
        <end position="553"/>
    </location>
</feature>
<feature type="transmembrane region" description="Helical" evidence="1">
    <location>
        <begin position="4"/>
        <end position="24"/>
    </location>
</feature>
<feature type="transmembrane region" description="Helical" evidence="1">
    <location>
        <begin position="28"/>
        <end position="48"/>
    </location>
</feature>
<feature type="transmembrane region" description="Helical" evidence="1">
    <location>
        <begin position="65"/>
        <end position="85"/>
    </location>
</feature>
<feature type="transmembrane region" description="Helical" evidence="1">
    <location>
        <begin position="95"/>
        <end position="115"/>
    </location>
</feature>
<feature type="transmembrane region" description="Helical" evidence="1">
    <location>
        <begin position="158"/>
        <end position="178"/>
    </location>
</feature>
<feature type="transmembrane region" description="Helical" evidence="1">
    <location>
        <begin position="371"/>
        <end position="391"/>
    </location>
</feature>
<feature type="transmembrane region" description="Helical" evidence="1">
    <location>
        <begin position="394"/>
        <end position="414"/>
    </location>
</feature>
<feature type="transmembrane region" description="Helical" evidence="1">
    <location>
        <begin position="439"/>
        <end position="459"/>
    </location>
</feature>
<feature type="transmembrane region" description="Helical" evidence="1">
    <location>
        <begin position="464"/>
        <end position="484"/>
    </location>
</feature>
<feature type="transmembrane region" description="Helical" evidence="1">
    <location>
        <begin position="533"/>
        <end position="553"/>
    </location>
</feature>
<feature type="domain" description="RCK C-terminal 1" evidence="1">
    <location>
        <begin position="191"/>
        <end position="276"/>
    </location>
</feature>
<feature type="domain" description="RCK C-terminal 2" evidence="1">
    <location>
        <begin position="279"/>
        <end position="361"/>
    </location>
</feature>
<comment type="subcellular location">
    <subcellularLocation>
        <location evidence="1">Cell membrane</location>
        <topology evidence="1">Multi-pass membrane protein</topology>
    </subcellularLocation>
</comment>
<comment type="similarity">
    <text evidence="1">Belongs to the AAE transporter (TC 2.A.81) family. YidE subfamily.</text>
</comment>
<comment type="sequence caution" evidence="2">
    <conflict type="erroneous initiation">
        <sequence resource="EMBL-CDS" id="ABB64077"/>
    </conflict>
</comment>
<evidence type="ECO:0000255" key="1">
    <source>
        <dbReference type="HAMAP-Rule" id="MF_01016"/>
    </source>
</evidence>
<evidence type="ECO:0000305" key="2"/>
<dbReference type="EMBL" id="CP000034">
    <property type="protein sequence ID" value="ABB64077.1"/>
    <property type="status" value="ALT_INIT"/>
    <property type="molecule type" value="Genomic_DNA"/>
</dbReference>
<dbReference type="RefSeq" id="WP_001279745.1">
    <property type="nucleotide sequence ID" value="NC_007606.1"/>
</dbReference>
<dbReference type="RefSeq" id="YP_405568.2">
    <property type="nucleotide sequence ID" value="NC_007606.1"/>
</dbReference>
<dbReference type="SMR" id="Q329C8"/>
<dbReference type="STRING" id="300267.SDY_4171"/>
<dbReference type="EnsemblBacteria" id="ABB64077">
    <property type="protein sequence ID" value="ABB64077"/>
    <property type="gene ID" value="SDY_4171"/>
</dbReference>
<dbReference type="KEGG" id="sdy:SDY_4171"/>
<dbReference type="PATRIC" id="fig|300267.13.peg.4904"/>
<dbReference type="HOGENOM" id="CLU_035023_3_1_6"/>
<dbReference type="Proteomes" id="UP000002716">
    <property type="component" value="Chromosome"/>
</dbReference>
<dbReference type="GO" id="GO:0005886">
    <property type="term" value="C:plasma membrane"/>
    <property type="evidence" value="ECO:0007669"/>
    <property type="project" value="UniProtKB-SubCell"/>
</dbReference>
<dbReference type="GO" id="GO:0008324">
    <property type="term" value="F:monoatomic cation transmembrane transporter activity"/>
    <property type="evidence" value="ECO:0007669"/>
    <property type="project" value="InterPro"/>
</dbReference>
<dbReference type="GO" id="GO:0006813">
    <property type="term" value="P:potassium ion transport"/>
    <property type="evidence" value="ECO:0007669"/>
    <property type="project" value="InterPro"/>
</dbReference>
<dbReference type="FunFam" id="3.30.70.1450:FF:000004">
    <property type="entry name" value="Putative transport protein YidE"/>
    <property type="match status" value="1"/>
</dbReference>
<dbReference type="Gene3D" id="3.30.70.1450">
    <property type="entry name" value="Regulator of K+ conductance, C-terminal domain"/>
    <property type="match status" value="2"/>
</dbReference>
<dbReference type="HAMAP" id="MF_01016">
    <property type="entry name" value="YidE"/>
    <property type="match status" value="1"/>
</dbReference>
<dbReference type="InterPro" id="IPR050144">
    <property type="entry name" value="AAE_transporter"/>
</dbReference>
<dbReference type="InterPro" id="IPR006037">
    <property type="entry name" value="RCK_C"/>
</dbReference>
<dbReference type="InterPro" id="IPR036721">
    <property type="entry name" value="RCK_C_sf"/>
</dbReference>
<dbReference type="InterPro" id="IPR023018">
    <property type="entry name" value="Transpt_YidE_put"/>
</dbReference>
<dbReference type="InterPro" id="IPR006512">
    <property type="entry name" value="YidE_YbjL"/>
</dbReference>
<dbReference type="NCBIfam" id="NF003007">
    <property type="entry name" value="PRK03818.1"/>
    <property type="match status" value="1"/>
</dbReference>
<dbReference type="NCBIfam" id="TIGR01625">
    <property type="entry name" value="YidE_YbjL_dupl"/>
    <property type="match status" value="2"/>
</dbReference>
<dbReference type="PANTHER" id="PTHR30445">
    <property type="entry name" value="K(+)_H(+) ANTIPORTER SUBUNIT KHTT"/>
    <property type="match status" value="1"/>
</dbReference>
<dbReference type="PANTHER" id="PTHR30445:SF3">
    <property type="entry name" value="TRANSPORT PROTEIN YIDE-RELATED"/>
    <property type="match status" value="1"/>
</dbReference>
<dbReference type="Pfam" id="PF06826">
    <property type="entry name" value="Asp-Al_Ex"/>
    <property type="match status" value="2"/>
</dbReference>
<dbReference type="Pfam" id="PF02080">
    <property type="entry name" value="TrkA_C"/>
    <property type="match status" value="2"/>
</dbReference>
<dbReference type="SUPFAM" id="SSF116726">
    <property type="entry name" value="TrkA C-terminal domain-like"/>
    <property type="match status" value="2"/>
</dbReference>
<dbReference type="PROSITE" id="PS51202">
    <property type="entry name" value="RCK_C"/>
    <property type="match status" value="2"/>
</dbReference>
<protein>
    <recommendedName>
        <fullName evidence="1">Putative transport protein YidE</fullName>
    </recommendedName>
</protein>
<accession>Q329C8</accession>
<keyword id="KW-1003">Cell membrane</keyword>
<keyword id="KW-0472">Membrane</keyword>
<keyword id="KW-1185">Reference proteome</keyword>
<keyword id="KW-0677">Repeat</keyword>
<keyword id="KW-0812">Transmembrane</keyword>
<keyword id="KW-1133">Transmembrane helix</keyword>
<keyword id="KW-0813">Transport</keyword>
<proteinExistence type="inferred from homology"/>
<name>YIDE_SHIDS</name>